<name>PETG_LACSA</name>
<accession>Q332V9</accession>
<dbReference type="EMBL" id="AP007232">
    <property type="protein sequence ID" value="BAE47613.1"/>
    <property type="molecule type" value="Genomic_DNA"/>
</dbReference>
<dbReference type="EMBL" id="DQ383816">
    <property type="protein sequence ID" value="ABD47252.1"/>
    <property type="molecule type" value="Genomic_DNA"/>
</dbReference>
<dbReference type="RefSeq" id="YP_398348.1">
    <property type="nucleotide sequence ID" value="NC_007578.1"/>
</dbReference>
<dbReference type="SMR" id="Q332V9"/>
<dbReference type="GeneID" id="3772866"/>
<dbReference type="KEGG" id="lsv:3772866"/>
<dbReference type="OrthoDB" id="35473at2759"/>
<dbReference type="GO" id="GO:0009535">
    <property type="term" value="C:chloroplast thylakoid membrane"/>
    <property type="evidence" value="ECO:0007669"/>
    <property type="project" value="UniProtKB-SubCell"/>
</dbReference>
<dbReference type="GO" id="GO:0009512">
    <property type="term" value="C:cytochrome b6f complex"/>
    <property type="evidence" value="ECO:0007669"/>
    <property type="project" value="InterPro"/>
</dbReference>
<dbReference type="GO" id="GO:0045158">
    <property type="term" value="F:electron transporter, transferring electrons within cytochrome b6/f complex of photosystem II activity"/>
    <property type="evidence" value="ECO:0007669"/>
    <property type="project" value="UniProtKB-UniRule"/>
</dbReference>
<dbReference type="GO" id="GO:0017004">
    <property type="term" value="P:cytochrome complex assembly"/>
    <property type="evidence" value="ECO:0007669"/>
    <property type="project" value="UniProtKB-UniRule"/>
</dbReference>
<dbReference type="GO" id="GO:0015979">
    <property type="term" value="P:photosynthesis"/>
    <property type="evidence" value="ECO:0007669"/>
    <property type="project" value="UniProtKB-KW"/>
</dbReference>
<dbReference type="HAMAP" id="MF_00432">
    <property type="entry name" value="Cytb6_f_PetG"/>
    <property type="match status" value="1"/>
</dbReference>
<dbReference type="InterPro" id="IPR003683">
    <property type="entry name" value="Cyt_6/f_cplx_su5"/>
</dbReference>
<dbReference type="InterPro" id="IPR036099">
    <property type="entry name" value="Cyt_6/f_cplx_su5_sf"/>
</dbReference>
<dbReference type="NCBIfam" id="NF001907">
    <property type="entry name" value="PRK00665.1"/>
    <property type="match status" value="1"/>
</dbReference>
<dbReference type="Pfam" id="PF02529">
    <property type="entry name" value="PetG"/>
    <property type="match status" value="1"/>
</dbReference>
<dbReference type="PIRSF" id="PIRSF000034">
    <property type="entry name" value="Cyt_b6-f_V"/>
    <property type="match status" value="1"/>
</dbReference>
<dbReference type="SUPFAM" id="SSF103446">
    <property type="entry name" value="PetG subunit of the cytochrome b6f complex"/>
    <property type="match status" value="1"/>
</dbReference>
<organism>
    <name type="scientific">Lactuca sativa</name>
    <name type="common">Garden lettuce</name>
    <dbReference type="NCBI Taxonomy" id="4236"/>
    <lineage>
        <taxon>Eukaryota</taxon>
        <taxon>Viridiplantae</taxon>
        <taxon>Streptophyta</taxon>
        <taxon>Embryophyta</taxon>
        <taxon>Tracheophyta</taxon>
        <taxon>Spermatophyta</taxon>
        <taxon>Magnoliopsida</taxon>
        <taxon>eudicotyledons</taxon>
        <taxon>Gunneridae</taxon>
        <taxon>Pentapetalae</taxon>
        <taxon>asterids</taxon>
        <taxon>campanulids</taxon>
        <taxon>Asterales</taxon>
        <taxon>Asteraceae</taxon>
        <taxon>Cichorioideae</taxon>
        <taxon>Cichorieae</taxon>
        <taxon>Lactucinae</taxon>
        <taxon>Lactuca</taxon>
    </lineage>
</organism>
<gene>
    <name evidence="1" type="primary">petG</name>
</gene>
<geneLocation type="chloroplast"/>
<protein>
    <recommendedName>
        <fullName evidence="1">Cytochrome b6-f complex subunit 5</fullName>
    </recommendedName>
    <alternativeName>
        <fullName evidence="1">Cytochrome b6-f complex subunit PetG</fullName>
    </alternativeName>
    <alternativeName>
        <fullName evidence="1">Cytochrome b6-f complex subunit V</fullName>
    </alternativeName>
</protein>
<evidence type="ECO:0000255" key="1">
    <source>
        <dbReference type="HAMAP-Rule" id="MF_00432"/>
    </source>
</evidence>
<sequence length="37" mass="4170">MIEVFLFGIVLGLIPITLAGLFVTAYLQYRRGDQLDL</sequence>
<reference key="1">
    <citation type="journal article" date="2006" name="Transgenic Res.">
        <title>Efficient and stable transformation of Lactuca sativa L. cv. Cisco (lettuce) plastids.</title>
        <authorList>
            <person name="Kanamoto H."/>
            <person name="Yamashita A."/>
            <person name="Asao H."/>
            <person name="Okumura S."/>
            <person name="Takase H."/>
            <person name="Hattori M."/>
            <person name="Yokota A."/>
            <person name="Tomizawa K."/>
        </authorList>
    </citation>
    <scope>NUCLEOTIDE SEQUENCE [LARGE SCALE GENOMIC DNA]</scope>
    <source>
        <strain>cv. Cisco</strain>
    </source>
</reference>
<reference key="2">
    <citation type="submission" date="2006-01" db="EMBL/GenBank/DDBJ databases">
        <title>A comparison of the first two published chloroplast genomes in Asteraceae: Lactuca and Helianthus.</title>
        <authorList>
            <person name="Timme R.E."/>
            <person name="Kuehl J.V."/>
            <person name="Boore J.L."/>
            <person name="Jansen R.K."/>
        </authorList>
    </citation>
    <scope>NUCLEOTIDE SEQUENCE [LARGE SCALE GENOMIC DNA]</scope>
    <source>
        <strain>cv. Salinas</strain>
    </source>
</reference>
<comment type="function">
    <text evidence="1">Component of the cytochrome b6-f complex, which mediates electron transfer between photosystem II (PSII) and photosystem I (PSI), cyclic electron flow around PSI, and state transitions. PetG is required for either the stability or assembly of the cytochrome b6-f complex.</text>
</comment>
<comment type="subunit">
    <text evidence="1">The 4 large subunits of the cytochrome b6-f complex are cytochrome b6, subunit IV (17 kDa polypeptide, PetD), cytochrome f and the Rieske protein, while the 4 small subunits are PetG, PetL, PetM and PetN. The complex functions as a dimer.</text>
</comment>
<comment type="subcellular location">
    <subcellularLocation>
        <location evidence="1">Plastid</location>
        <location evidence="1">Chloroplast thylakoid membrane</location>
        <topology evidence="1">Single-pass membrane protein</topology>
    </subcellularLocation>
</comment>
<comment type="similarity">
    <text evidence="1">Belongs to the PetG family.</text>
</comment>
<feature type="chain" id="PRO_0000275494" description="Cytochrome b6-f complex subunit 5">
    <location>
        <begin position="1"/>
        <end position="37"/>
    </location>
</feature>
<feature type="transmembrane region" description="Helical" evidence="1">
    <location>
        <begin position="5"/>
        <end position="25"/>
    </location>
</feature>
<proteinExistence type="inferred from homology"/>
<keyword id="KW-0150">Chloroplast</keyword>
<keyword id="KW-0249">Electron transport</keyword>
<keyword id="KW-0472">Membrane</keyword>
<keyword id="KW-0602">Photosynthesis</keyword>
<keyword id="KW-0934">Plastid</keyword>
<keyword id="KW-0793">Thylakoid</keyword>
<keyword id="KW-0812">Transmembrane</keyword>
<keyword id="KW-1133">Transmembrane helix</keyword>
<keyword id="KW-0813">Transport</keyword>